<comment type="function">
    <text evidence="1">This is one of the proteins that binds to the 5S RNA in the ribosome where it forms part of the central protuberance.</text>
</comment>
<comment type="subunit">
    <text evidence="1">Part of the 50S ribosomal subunit; part of the 5S rRNA/L5/L18/L25 subcomplex. Contacts the 5S rRNA. Binds to the 5S rRNA independently of L5 and L18.</text>
</comment>
<comment type="similarity">
    <text evidence="1">Belongs to the bacterial ribosomal protein bL25 family.</text>
</comment>
<feature type="chain" id="PRO_0000181494" description="Large ribosomal subunit protein bL25">
    <location>
        <begin position="1"/>
        <end position="95"/>
    </location>
</feature>
<gene>
    <name evidence="1" type="primary">rplY</name>
    <name type="ordered locus">SO_2112</name>
</gene>
<keyword id="KW-1185">Reference proteome</keyword>
<keyword id="KW-0687">Ribonucleoprotein</keyword>
<keyword id="KW-0689">Ribosomal protein</keyword>
<keyword id="KW-0694">RNA-binding</keyword>
<keyword id="KW-0699">rRNA-binding</keyword>
<reference key="1">
    <citation type="journal article" date="2002" name="Nat. Biotechnol.">
        <title>Genome sequence of the dissimilatory metal ion-reducing bacterium Shewanella oneidensis.</title>
        <authorList>
            <person name="Heidelberg J.F."/>
            <person name="Paulsen I.T."/>
            <person name="Nelson K.E."/>
            <person name="Gaidos E.J."/>
            <person name="Nelson W.C."/>
            <person name="Read T.D."/>
            <person name="Eisen J.A."/>
            <person name="Seshadri R."/>
            <person name="Ward N.L."/>
            <person name="Methe B.A."/>
            <person name="Clayton R.A."/>
            <person name="Meyer T."/>
            <person name="Tsapin A."/>
            <person name="Scott J."/>
            <person name="Beanan M.J."/>
            <person name="Brinkac L.M."/>
            <person name="Daugherty S.C."/>
            <person name="DeBoy R.T."/>
            <person name="Dodson R.J."/>
            <person name="Durkin A.S."/>
            <person name="Haft D.H."/>
            <person name="Kolonay J.F."/>
            <person name="Madupu R."/>
            <person name="Peterson J.D."/>
            <person name="Umayam L.A."/>
            <person name="White O."/>
            <person name="Wolf A.M."/>
            <person name="Vamathevan J.J."/>
            <person name="Weidman J.F."/>
            <person name="Impraim M."/>
            <person name="Lee K."/>
            <person name="Berry K.J."/>
            <person name="Lee C."/>
            <person name="Mueller J."/>
            <person name="Khouri H.M."/>
            <person name="Gill J."/>
            <person name="Utterback T.R."/>
            <person name="McDonald L.A."/>
            <person name="Feldblyum T.V."/>
            <person name="Smith H.O."/>
            <person name="Venter J.C."/>
            <person name="Nealson K.H."/>
            <person name="Fraser C.M."/>
        </authorList>
    </citation>
    <scope>NUCLEOTIDE SEQUENCE [LARGE SCALE GENOMIC DNA]</scope>
    <source>
        <strain>ATCC 700550 / JCM 31522 / CIP 106686 / LMG 19005 / NCIMB 14063 / MR-1</strain>
    </source>
</reference>
<sequence>MSYTITAQTRTEIGKGSSRRLRHAGKVPAVIYGAGKEPVSIVFDHKDIINAQANDDFYTSVVTIVLDGKEVGVRAQAMQRHAFKPIIEHVDFVYA</sequence>
<name>RL25_SHEON</name>
<dbReference type="EMBL" id="AE014299">
    <property type="protein sequence ID" value="AAN55159.2"/>
    <property type="molecule type" value="Genomic_DNA"/>
</dbReference>
<dbReference type="RefSeq" id="NP_717715.2">
    <property type="nucleotide sequence ID" value="NC_004347.2"/>
</dbReference>
<dbReference type="RefSeq" id="WP_011072175.1">
    <property type="nucleotide sequence ID" value="NC_004347.2"/>
</dbReference>
<dbReference type="SMR" id="Q8EF74"/>
<dbReference type="STRING" id="211586.SO_2112"/>
<dbReference type="PaxDb" id="211586-SO_2112"/>
<dbReference type="KEGG" id="son:SO_2112"/>
<dbReference type="PATRIC" id="fig|211586.12.peg.2028"/>
<dbReference type="eggNOG" id="COG1825">
    <property type="taxonomic scope" value="Bacteria"/>
</dbReference>
<dbReference type="HOGENOM" id="CLU_137946_0_0_6"/>
<dbReference type="OrthoDB" id="9806411at2"/>
<dbReference type="PhylomeDB" id="Q8EF74"/>
<dbReference type="BioCyc" id="SONE211586:G1GMP-1942-MONOMER"/>
<dbReference type="Proteomes" id="UP000008186">
    <property type="component" value="Chromosome"/>
</dbReference>
<dbReference type="GO" id="GO:0022625">
    <property type="term" value="C:cytosolic large ribosomal subunit"/>
    <property type="evidence" value="ECO:0000318"/>
    <property type="project" value="GO_Central"/>
</dbReference>
<dbReference type="GO" id="GO:0008097">
    <property type="term" value="F:5S rRNA binding"/>
    <property type="evidence" value="ECO:0000318"/>
    <property type="project" value="GO_Central"/>
</dbReference>
<dbReference type="GO" id="GO:0003735">
    <property type="term" value="F:structural constituent of ribosome"/>
    <property type="evidence" value="ECO:0007669"/>
    <property type="project" value="InterPro"/>
</dbReference>
<dbReference type="GO" id="GO:0006412">
    <property type="term" value="P:translation"/>
    <property type="evidence" value="ECO:0000318"/>
    <property type="project" value="GO_Central"/>
</dbReference>
<dbReference type="CDD" id="cd00495">
    <property type="entry name" value="Ribosomal_L25_TL5_CTC"/>
    <property type="match status" value="1"/>
</dbReference>
<dbReference type="FunFam" id="2.40.240.10:FF:000002">
    <property type="entry name" value="50S ribosomal protein L25"/>
    <property type="match status" value="1"/>
</dbReference>
<dbReference type="Gene3D" id="2.40.240.10">
    <property type="entry name" value="Ribosomal Protein L25, Chain P"/>
    <property type="match status" value="1"/>
</dbReference>
<dbReference type="HAMAP" id="MF_01336">
    <property type="entry name" value="Ribosomal_bL25"/>
    <property type="match status" value="1"/>
</dbReference>
<dbReference type="InterPro" id="IPR020056">
    <property type="entry name" value="Rbsml_bL25/Gln-tRNA_synth_N"/>
</dbReference>
<dbReference type="InterPro" id="IPR011035">
    <property type="entry name" value="Ribosomal_bL25/Gln-tRNA_synth"/>
</dbReference>
<dbReference type="InterPro" id="IPR001021">
    <property type="entry name" value="Ribosomal_bL25_long"/>
</dbReference>
<dbReference type="InterPro" id="IPR020055">
    <property type="entry name" value="Ribosomal_bL25_short"/>
</dbReference>
<dbReference type="InterPro" id="IPR029751">
    <property type="entry name" value="Ribosomal_L25_dom"/>
</dbReference>
<dbReference type="InterPro" id="IPR020930">
    <property type="entry name" value="Ribosomal_uL5_bac-type"/>
</dbReference>
<dbReference type="NCBIfam" id="TIGR00731">
    <property type="entry name" value="bL25_bact_ctc"/>
    <property type="match status" value="1"/>
</dbReference>
<dbReference type="NCBIfam" id="NF004612">
    <property type="entry name" value="PRK05943.1"/>
    <property type="match status" value="1"/>
</dbReference>
<dbReference type="PANTHER" id="PTHR33284">
    <property type="entry name" value="RIBOSOMAL PROTEIN L25/GLN-TRNA SYNTHETASE, ANTI-CODON-BINDING DOMAIN-CONTAINING PROTEIN"/>
    <property type="match status" value="1"/>
</dbReference>
<dbReference type="PANTHER" id="PTHR33284:SF1">
    <property type="entry name" value="RIBOSOMAL PROTEIN L25_GLN-TRNA SYNTHETASE, ANTI-CODON-BINDING DOMAIN-CONTAINING PROTEIN"/>
    <property type="match status" value="1"/>
</dbReference>
<dbReference type="Pfam" id="PF01386">
    <property type="entry name" value="Ribosomal_L25p"/>
    <property type="match status" value="1"/>
</dbReference>
<dbReference type="SUPFAM" id="SSF50715">
    <property type="entry name" value="Ribosomal protein L25-like"/>
    <property type="match status" value="1"/>
</dbReference>
<organism>
    <name type="scientific">Shewanella oneidensis (strain ATCC 700550 / JCM 31522 / CIP 106686 / LMG 19005 / NCIMB 14063 / MR-1)</name>
    <dbReference type="NCBI Taxonomy" id="211586"/>
    <lineage>
        <taxon>Bacteria</taxon>
        <taxon>Pseudomonadati</taxon>
        <taxon>Pseudomonadota</taxon>
        <taxon>Gammaproteobacteria</taxon>
        <taxon>Alteromonadales</taxon>
        <taxon>Shewanellaceae</taxon>
        <taxon>Shewanella</taxon>
    </lineage>
</organism>
<evidence type="ECO:0000255" key="1">
    <source>
        <dbReference type="HAMAP-Rule" id="MF_01336"/>
    </source>
</evidence>
<evidence type="ECO:0000305" key="2"/>
<proteinExistence type="inferred from homology"/>
<accession>Q8EF74</accession>
<protein>
    <recommendedName>
        <fullName evidence="1">Large ribosomal subunit protein bL25</fullName>
    </recommendedName>
    <alternativeName>
        <fullName evidence="2">50S ribosomal protein L25</fullName>
    </alternativeName>
</protein>